<protein>
    <recommendedName>
        <fullName evidence="1">Ribosome-recycling factor</fullName>
        <shortName evidence="1">RRF</shortName>
    </recommendedName>
    <alternativeName>
        <fullName evidence="1">Ribosome-releasing factor</fullName>
    </alternativeName>
</protein>
<keyword id="KW-0963">Cytoplasm</keyword>
<keyword id="KW-0648">Protein biosynthesis</keyword>
<keyword id="KW-1185">Reference proteome</keyword>
<sequence>MSKEVLSKSKEKMEKAEQALTRQLGTIRAGRANASLLDRLSVDYYGAATPVNQMASISVPEARMLLITPYDKTILGEIEKAILKSDLGLTPNNDGSVLRLSIPQLTEERRKELVKEVKKEAEEAKVAVRNIRREANEELKKLEKNGDITEDDLRSYGEDVQKLTDESIKNIDSITKDKEAEILEV</sequence>
<evidence type="ECO:0000255" key="1">
    <source>
        <dbReference type="HAMAP-Rule" id="MF_00040"/>
    </source>
</evidence>
<reference key="1">
    <citation type="journal article" date="2001" name="Science">
        <title>Comparative genomics of Listeria species.</title>
        <authorList>
            <person name="Glaser P."/>
            <person name="Frangeul L."/>
            <person name="Buchrieser C."/>
            <person name="Rusniok C."/>
            <person name="Amend A."/>
            <person name="Baquero F."/>
            <person name="Berche P."/>
            <person name="Bloecker H."/>
            <person name="Brandt P."/>
            <person name="Chakraborty T."/>
            <person name="Charbit A."/>
            <person name="Chetouani F."/>
            <person name="Couve E."/>
            <person name="de Daruvar A."/>
            <person name="Dehoux P."/>
            <person name="Domann E."/>
            <person name="Dominguez-Bernal G."/>
            <person name="Duchaud E."/>
            <person name="Durant L."/>
            <person name="Dussurget O."/>
            <person name="Entian K.-D."/>
            <person name="Fsihi H."/>
            <person name="Garcia-del Portillo F."/>
            <person name="Garrido P."/>
            <person name="Gautier L."/>
            <person name="Goebel W."/>
            <person name="Gomez-Lopez N."/>
            <person name="Hain T."/>
            <person name="Hauf J."/>
            <person name="Jackson D."/>
            <person name="Jones L.-M."/>
            <person name="Kaerst U."/>
            <person name="Kreft J."/>
            <person name="Kuhn M."/>
            <person name="Kunst F."/>
            <person name="Kurapkat G."/>
            <person name="Madueno E."/>
            <person name="Maitournam A."/>
            <person name="Mata Vicente J."/>
            <person name="Ng E."/>
            <person name="Nedjari H."/>
            <person name="Nordsiek G."/>
            <person name="Novella S."/>
            <person name="de Pablos B."/>
            <person name="Perez-Diaz J.-C."/>
            <person name="Purcell R."/>
            <person name="Remmel B."/>
            <person name="Rose M."/>
            <person name="Schlueter T."/>
            <person name="Simoes N."/>
            <person name="Tierrez A."/>
            <person name="Vazquez-Boland J.-A."/>
            <person name="Voss H."/>
            <person name="Wehland J."/>
            <person name="Cossart P."/>
        </authorList>
    </citation>
    <scope>NUCLEOTIDE SEQUENCE [LARGE SCALE GENOMIC DNA]</scope>
    <source>
        <strain>ATCC BAA-679 / EGD-e</strain>
    </source>
</reference>
<name>RRF_LISMO</name>
<feature type="chain" id="PRO_0000167486" description="Ribosome-recycling factor">
    <location>
        <begin position="1"/>
        <end position="185"/>
    </location>
</feature>
<proteinExistence type="inferred from homology"/>
<comment type="function">
    <text evidence="1">Responsible for the release of ribosomes from messenger RNA at the termination of protein biosynthesis. May increase the efficiency of translation by recycling ribosomes from one round of translation to another.</text>
</comment>
<comment type="subcellular location">
    <subcellularLocation>
        <location evidence="1">Cytoplasm</location>
    </subcellularLocation>
</comment>
<comment type="similarity">
    <text evidence="1">Belongs to the RRF family.</text>
</comment>
<gene>
    <name evidence="1" type="primary">frr</name>
    <name type="ordered locus">lmo1314</name>
</gene>
<accession>Q8Y7G7</accession>
<dbReference type="EMBL" id="AL591978">
    <property type="protein sequence ID" value="CAC99392.1"/>
    <property type="molecule type" value="Genomic_DNA"/>
</dbReference>
<dbReference type="PIR" id="AB1239">
    <property type="entry name" value="AB1239"/>
</dbReference>
<dbReference type="RefSeq" id="NP_464839.1">
    <property type="nucleotide sequence ID" value="NC_003210.1"/>
</dbReference>
<dbReference type="RefSeq" id="WP_003723450.1">
    <property type="nucleotide sequence ID" value="NZ_CP149495.1"/>
</dbReference>
<dbReference type="SMR" id="Q8Y7G7"/>
<dbReference type="STRING" id="169963.gene:17593971"/>
<dbReference type="PaxDb" id="169963-lmo1314"/>
<dbReference type="EnsemblBacteria" id="CAC99392">
    <property type="protein sequence ID" value="CAC99392"/>
    <property type="gene ID" value="CAC99392"/>
</dbReference>
<dbReference type="GeneID" id="987693"/>
<dbReference type="KEGG" id="lmo:lmo1314"/>
<dbReference type="PATRIC" id="fig|169963.11.peg.1351"/>
<dbReference type="eggNOG" id="COG0233">
    <property type="taxonomic scope" value="Bacteria"/>
</dbReference>
<dbReference type="HOGENOM" id="CLU_073981_2_0_9"/>
<dbReference type="OrthoDB" id="9804006at2"/>
<dbReference type="PhylomeDB" id="Q8Y7G7"/>
<dbReference type="BioCyc" id="LMON169963:LMO1314-MONOMER"/>
<dbReference type="Proteomes" id="UP000000817">
    <property type="component" value="Chromosome"/>
</dbReference>
<dbReference type="GO" id="GO:0005737">
    <property type="term" value="C:cytoplasm"/>
    <property type="evidence" value="ECO:0007669"/>
    <property type="project" value="UniProtKB-SubCell"/>
</dbReference>
<dbReference type="GO" id="GO:0043023">
    <property type="term" value="F:ribosomal large subunit binding"/>
    <property type="evidence" value="ECO:0000318"/>
    <property type="project" value="GO_Central"/>
</dbReference>
<dbReference type="GO" id="GO:0006412">
    <property type="term" value="P:translation"/>
    <property type="evidence" value="ECO:0000318"/>
    <property type="project" value="GO_Central"/>
</dbReference>
<dbReference type="GO" id="GO:0006415">
    <property type="term" value="P:translational termination"/>
    <property type="evidence" value="ECO:0007669"/>
    <property type="project" value="UniProtKB-UniRule"/>
</dbReference>
<dbReference type="CDD" id="cd00520">
    <property type="entry name" value="RRF"/>
    <property type="match status" value="1"/>
</dbReference>
<dbReference type="FunFam" id="1.10.132.20:FF:000001">
    <property type="entry name" value="Ribosome-recycling factor"/>
    <property type="match status" value="1"/>
</dbReference>
<dbReference type="FunFam" id="3.30.1360.40:FF:000001">
    <property type="entry name" value="Ribosome-recycling factor"/>
    <property type="match status" value="1"/>
</dbReference>
<dbReference type="Gene3D" id="3.30.1360.40">
    <property type="match status" value="1"/>
</dbReference>
<dbReference type="Gene3D" id="1.10.132.20">
    <property type="entry name" value="Ribosome-recycling factor"/>
    <property type="match status" value="1"/>
</dbReference>
<dbReference type="HAMAP" id="MF_00040">
    <property type="entry name" value="RRF"/>
    <property type="match status" value="1"/>
</dbReference>
<dbReference type="InterPro" id="IPR002661">
    <property type="entry name" value="Ribosome_recyc_fac"/>
</dbReference>
<dbReference type="InterPro" id="IPR023584">
    <property type="entry name" value="Ribosome_recyc_fac_dom"/>
</dbReference>
<dbReference type="InterPro" id="IPR036191">
    <property type="entry name" value="RRF_sf"/>
</dbReference>
<dbReference type="NCBIfam" id="TIGR00496">
    <property type="entry name" value="frr"/>
    <property type="match status" value="1"/>
</dbReference>
<dbReference type="PANTHER" id="PTHR20982:SF3">
    <property type="entry name" value="MITOCHONDRIAL RIBOSOME RECYCLING FACTOR PSEUDO 1"/>
    <property type="match status" value="1"/>
</dbReference>
<dbReference type="PANTHER" id="PTHR20982">
    <property type="entry name" value="RIBOSOME RECYCLING FACTOR"/>
    <property type="match status" value="1"/>
</dbReference>
<dbReference type="Pfam" id="PF01765">
    <property type="entry name" value="RRF"/>
    <property type="match status" value="1"/>
</dbReference>
<dbReference type="SUPFAM" id="SSF55194">
    <property type="entry name" value="Ribosome recycling factor, RRF"/>
    <property type="match status" value="1"/>
</dbReference>
<organism>
    <name type="scientific">Listeria monocytogenes serovar 1/2a (strain ATCC BAA-679 / EGD-e)</name>
    <dbReference type="NCBI Taxonomy" id="169963"/>
    <lineage>
        <taxon>Bacteria</taxon>
        <taxon>Bacillati</taxon>
        <taxon>Bacillota</taxon>
        <taxon>Bacilli</taxon>
        <taxon>Bacillales</taxon>
        <taxon>Listeriaceae</taxon>
        <taxon>Listeria</taxon>
    </lineage>
</organism>